<evidence type="ECO:0000250" key="1">
    <source>
        <dbReference type="UniProtKB" id="O96011"/>
    </source>
</evidence>
<evidence type="ECO:0000255" key="2"/>
<evidence type="ECO:0000305" key="3"/>
<gene>
    <name type="primary">PEX11B</name>
</gene>
<protein>
    <recommendedName>
        <fullName>Peroxisomal membrane protein 11B</fullName>
    </recommendedName>
    <alternativeName>
        <fullName>Peroxin-11B</fullName>
    </alternativeName>
    <alternativeName>
        <fullName>Peroxisomal biogenesis factor 11B</fullName>
    </alternativeName>
</protein>
<comment type="function">
    <text evidence="1">Involved in peroxisomal proliferation. May regulate peroxisome division by recruiting the dynamin-related GTPase DNM1L to the peroxisomal membrane. Promotes membrane protrusion and elongation on the peroxisomal surface.</text>
</comment>
<comment type="subunit">
    <text evidence="1">Homodimer. Heterodimer with PEX11G. Interacts with PEX19. Interacts with FIS1.</text>
</comment>
<comment type="subcellular location">
    <subcellularLocation>
        <location evidence="1">Peroxisome membrane</location>
        <topology evidence="1">Single-pass membrane protein</topology>
    </subcellularLocation>
</comment>
<comment type="similarity">
    <text evidence="3">Belongs to the peroxin-11 family.</text>
</comment>
<dbReference type="EMBL" id="BC118195">
    <property type="protein sequence ID" value="AAI18196.1"/>
    <property type="molecule type" value="mRNA"/>
</dbReference>
<dbReference type="RefSeq" id="NP_001068734.1">
    <property type="nucleotide sequence ID" value="NM_001075266.1"/>
</dbReference>
<dbReference type="SMR" id="Q148K5"/>
<dbReference type="FunCoup" id="Q148K5">
    <property type="interactions" value="2086"/>
</dbReference>
<dbReference type="STRING" id="9913.ENSBTAP00000011022"/>
<dbReference type="PaxDb" id="9913-ENSBTAP00000011022"/>
<dbReference type="GeneID" id="506527"/>
<dbReference type="KEGG" id="bta:506527"/>
<dbReference type="CTD" id="8799"/>
<dbReference type="VEuPathDB" id="HostDB:ENSBTAG00000008372"/>
<dbReference type="eggNOG" id="KOG4186">
    <property type="taxonomic scope" value="Eukaryota"/>
</dbReference>
<dbReference type="HOGENOM" id="CLU_049216_2_0_1"/>
<dbReference type="InParanoid" id="Q148K5"/>
<dbReference type="OMA" id="AYHPTVA"/>
<dbReference type="OrthoDB" id="411017at2759"/>
<dbReference type="TreeFam" id="TF325704"/>
<dbReference type="Reactome" id="R-BTA-9603798">
    <property type="pathway name" value="Class I peroxisomal membrane protein import"/>
</dbReference>
<dbReference type="Proteomes" id="UP000009136">
    <property type="component" value="Chromosome 3"/>
</dbReference>
<dbReference type="Bgee" id="ENSBTAG00000008372">
    <property type="expression patterns" value="Expressed in choroid plexus and 104 other cell types or tissues"/>
</dbReference>
<dbReference type="GO" id="GO:0005778">
    <property type="term" value="C:peroxisomal membrane"/>
    <property type="evidence" value="ECO:0000318"/>
    <property type="project" value="GO_Central"/>
</dbReference>
<dbReference type="GO" id="GO:0016559">
    <property type="term" value="P:peroxisome fission"/>
    <property type="evidence" value="ECO:0000318"/>
    <property type="project" value="GO_Central"/>
</dbReference>
<dbReference type="InterPro" id="IPR008733">
    <property type="entry name" value="PEX11"/>
</dbReference>
<dbReference type="PANTHER" id="PTHR12652">
    <property type="entry name" value="PEROXISOMAL BIOGENESIS FACTOR 11"/>
    <property type="match status" value="1"/>
</dbReference>
<dbReference type="PANTHER" id="PTHR12652:SF7">
    <property type="entry name" value="PEROXISOMAL MEMBRANE PROTEIN 11B"/>
    <property type="match status" value="1"/>
</dbReference>
<dbReference type="Pfam" id="PF05648">
    <property type="entry name" value="PEX11"/>
    <property type="match status" value="1"/>
</dbReference>
<proteinExistence type="evidence at transcript level"/>
<feature type="chain" id="PRO_0000330308" description="Peroxisomal membrane protein 11B">
    <location>
        <begin position="1"/>
        <end position="258"/>
    </location>
</feature>
<feature type="transmembrane region" description="Helical" evidence="2">
    <location>
        <begin position="232"/>
        <end position="254"/>
    </location>
</feature>
<feature type="region of interest" description="Interaction with PEX19, PEX11G and FIS1 and peroxisome targeting" evidence="1">
    <location>
        <begin position="210"/>
        <end position="258"/>
    </location>
</feature>
<feature type="modified residue" description="N6-acetyllysine" evidence="1">
    <location>
        <position position="43"/>
    </location>
</feature>
<reference key="1">
    <citation type="submission" date="2006-06" db="EMBL/GenBank/DDBJ databases">
        <authorList>
            <consortium name="NIH - Mammalian Gene Collection (MGC) project"/>
        </authorList>
    </citation>
    <scope>NUCLEOTIDE SEQUENCE [LARGE SCALE MRNA]</scope>
    <source>
        <strain>Hereford</strain>
        <tissue>Thalamus</tissue>
    </source>
</reference>
<accession>Q148K5</accession>
<organism>
    <name type="scientific">Bos taurus</name>
    <name type="common">Bovine</name>
    <dbReference type="NCBI Taxonomy" id="9913"/>
    <lineage>
        <taxon>Eukaryota</taxon>
        <taxon>Metazoa</taxon>
        <taxon>Chordata</taxon>
        <taxon>Craniata</taxon>
        <taxon>Vertebrata</taxon>
        <taxon>Euteleostomi</taxon>
        <taxon>Mammalia</taxon>
        <taxon>Eutheria</taxon>
        <taxon>Laurasiatheria</taxon>
        <taxon>Artiodactyla</taxon>
        <taxon>Ruminantia</taxon>
        <taxon>Pecora</taxon>
        <taxon>Bovidae</taxon>
        <taxon>Bovinae</taxon>
        <taxon>Bos</taxon>
    </lineage>
</organism>
<sequence>MDAWVRFSAQSQARERLCRAAQYACSLLGHALQKHGASPELQKQIRQLEGHLSLGRKLLRLGNSADALESAKRAVHLSDVVLRFCITVSHLNRALYFACDNVLWAGKSGLAPRVDQEKWAQRSFRYYLFSLIMNLSRDAYEIRLLMEQESSACSRRLKGSGGVSGGIEPGGPGGPGIPGGGLPQVALKLRLRVLLLARVLRGHPPLLLDVVRNACDLFIPLDKLGLWRCGPGIVGLCGLVSSILSILTLICPWLRLKP</sequence>
<keyword id="KW-0007">Acetylation</keyword>
<keyword id="KW-0472">Membrane</keyword>
<keyword id="KW-0576">Peroxisome</keyword>
<keyword id="KW-0962">Peroxisome biogenesis</keyword>
<keyword id="KW-1185">Reference proteome</keyword>
<keyword id="KW-0812">Transmembrane</keyword>
<keyword id="KW-1133">Transmembrane helix</keyword>
<name>PX11B_BOVIN</name>